<reference evidence="4" key="1">
    <citation type="journal article" date="1994" name="Mech. Dev.">
        <title>The bipartite D. melanogaster twist promoter is reorganized in D. virilis.</title>
        <authorList>
            <person name="Pan D."/>
            <person name="Valentine S.A."/>
            <person name="Courey A.J."/>
        </authorList>
    </citation>
    <scope>NUCLEOTIDE SEQUENCE [GENOMIC DNA]</scope>
</reference>
<reference evidence="4 5" key="2">
    <citation type="journal article" date="2002" name="Genome Biol.">
        <title>Assessing the impact of comparative genomic sequence data on the functional annotation of the Drosophila genome.</title>
        <authorList>
            <person name="Bergman C.M."/>
            <person name="Pfeiffer B.D."/>
            <person name="Rincon-Limas D.E."/>
            <person name="Hoskins R.A."/>
            <person name="Gnirke A."/>
            <person name="Mungall C.J."/>
            <person name="Wang A.M."/>
            <person name="Kronmiller B."/>
            <person name="Pacleb J.M."/>
            <person name="Park S."/>
            <person name="Stapleton M."/>
            <person name="Wan K.H."/>
            <person name="George R.A."/>
            <person name="de Jong P.J."/>
            <person name="Botas J."/>
            <person name="Rubin G.M."/>
            <person name="Celniker S.E."/>
        </authorList>
    </citation>
    <scope>NUCLEOTIDE SEQUENCE [GENOMIC DNA] OF 1-296</scope>
</reference>
<gene>
    <name evidence="5" type="primary">twi</name>
</gene>
<protein>
    <recommendedName>
        <fullName>Protein twist</fullName>
    </recommendedName>
</protein>
<keyword id="KW-0217">Developmental protein</keyword>
<keyword id="KW-0221">Differentiation</keyword>
<keyword id="KW-0238">DNA-binding</keyword>
<keyword id="KW-0539">Nucleus</keyword>
<keyword id="KW-0804">Transcription</keyword>
<keyword id="KW-0805">Transcription regulation</keyword>
<sequence>MSARSVSPKVLLDISYKPTLPNIMELQHNVIKLIQVEQHAYMQLMEQPTAHYMQQQQQQQQHQQQQQQHQQQQQQQYAPLPSLAPNAADYAAYGITELEDTDYNIPSNEVLSTSSNHSAQSSLELNNNQHNFEQQQQQQQQQQQQQTATPAGVATAAQTPHGYMLNEHGKRSRSSSDYDCQTDALSMQPEHKKLLQQQQQQQQQQQQQQQQQLYVDYLPTTVDEVAAAQTQAQAPTQQSACLSPHSHSHSHFDFAADEELQDHKAHIFKYGGYPQTIAQQQQQQQQQQLHFQSSYRTGQNYEAYDPANSLNGSTYSSSDRDDMEYARQTALSSVGGYAKEDELEDMSPTCLGDDSSLLDAGDAAGKAFRKPRRRLKRKPSKTEETDEFSNQRVMANVRERQRTQSLNDAFKALQQIIPTLPSDKLSKIQTLKLATRYIDFLCRMLSSSDISLLKALEAQSSPVSPGYGNASTLLSAANGAEADLKCLRKANGAPIIPPEKLSYLFGVWRMEGDAQHQKA</sequence>
<accession>Q9TX44</accession>
<accession>Q8I187</accession>
<organism>
    <name type="scientific">Drosophila virilis</name>
    <name type="common">Fruit fly</name>
    <dbReference type="NCBI Taxonomy" id="7244"/>
    <lineage>
        <taxon>Eukaryota</taxon>
        <taxon>Metazoa</taxon>
        <taxon>Ecdysozoa</taxon>
        <taxon>Arthropoda</taxon>
        <taxon>Hexapoda</taxon>
        <taxon>Insecta</taxon>
        <taxon>Pterygota</taxon>
        <taxon>Neoptera</taxon>
        <taxon>Endopterygota</taxon>
        <taxon>Diptera</taxon>
        <taxon>Brachycera</taxon>
        <taxon>Muscomorpha</taxon>
        <taxon>Ephydroidea</taxon>
        <taxon>Drosophilidae</taxon>
        <taxon>Drosophila</taxon>
    </lineage>
</organism>
<proteinExistence type="inferred from homology"/>
<evidence type="ECO:0000250" key="1">
    <source>
        <dbReference type="UniProtKB" id="P10627"/>
    </source>
</evidence>
<evidence type="ECO:0000255" key="2">
    <source>
        <dbReference type="PROSITE-ProRule" id="PRU00981"/>
    </source>
</evidence>
<evidence type="ECO:0000256" key="3">
    <source>
        <dbReference type="SAM" id="MobiDB-lite"/>
    </source>
</evidence>
<evidence type="ECO:0000305" key="4"/>
<evidence type="ECO:0000312" key="5">
    <source>
        <dbReference type="EMBL" id="AAO01084.1"/>
    </source>
</evidence>
<feature type="chain" id="PRO_0000127479" description="Protein twist">
    <location>
        <begin position="1"/>
        <end position="519"/>
    </location>
</feature>
<feature type="domain" description="bHLH" evidence="2">
    <location>
        <begin position="390"/>
        <end position="441"/>
    </location>
</feature>
<feature type="region of interest" description="Disordered" evidence="3">
    <location>
        <begin position="53"/>
        <end position="77"/>
    </location>
</feature>
<feature type="region of interest" description="Disordered" evidence="3">
    <location>
        <begin position="131"/>
        <end position="156"/>
    </location>
</feature>
<feature type="region of interest" description="Disordered" evidence="3">
    <location>
        <begin position="301"/>
        <end position="321"/>
    </location>
</feature>
<feature type="region of interest" description="Disordered" evidence="3">
    <location>
        <begin position="368"/>
        <end position="389"/>
    </location>
</feature>
<feature type="compositionally biased region" description="Low complexity" evidence="3">
    <location>
        <begin position="54"/>
        <end position="76"/>
    </location>
</feature>
<feature type="compositionally biased region" description="Low complexity" evidence="3">
    <location>
        <begin position="134"/>
        <end position="146"/>
    </location>
</feature>
<feature type="compositionally biased region" description="Polar residues" evidence="3">
    <location>
        <begin position="308"/>
        <end position="317"/>
    </location>
</feature>
<feature type="compositionally biased region" description="Basic residues" evidence="3">
    <location>
        <begin position="368"/>
        <end position="379"/>
    </location>
</feature>
<feature type="sequence conflict" description="In Ref. 1." evidence="4" ref="1">
    <original>QQH</original>
    <variation>HQQ</variation>
    <location>
        <begin position="60"/>
        <end position="62"/>
    </location>
</feature>
<feature type="sequence conflict" description="In Ref. 1." evidence="4" ref="1">
    <original>QQH</original>
    <variation>HQQ</variation>
    <location>
        <begin position="67"/>
        <end position="69"/>
    </location>
</feature>
<feature type="sequence conflict" description="In Ref. 1." evidence="4" ref="1">
    <original>ATA</original>
    <variation>TTS</variation>
    <location>
        <begin position="154"/>
        <end position="156"/>
    </location>
</feature>
<feature type="sequence conflict" description="In Ref. 1." evidence="4" ref="1">
    <location>
        <begin position="196"/>
        <end position="201"/>
    </location>
</feature>
<feature type="sequence conflict" description="In Ref. 1." evidence="4" ref="1">
    <original>Q</original>
    <variation>QQQ</variation>
    <location>
        <position position="288"/>
    </location>
</feature>
<name>TWIST_DROVI</name>
<comment type="function">
    <text evidence="1">Involved in the establishment and dorsoventral patterning of germ layers in the embryo.</text>
</comment>
<comment type="subunit">
    <text evidence="1">Efficient DNA binding requires dimerization with another bHLH protein. Homodimer (By similarity).</text>
</comment>
<comment type="subcellular location">
    <subcellularLocation>
        <location evidence="2">Nucleus</location>
    </subcellularLocation>
</comment>
<dbReference type="EMBL" id="AY190956">
    <property type="protein sequence ID" value="AAO01084.1"/>
    <property type="molecule type" value="Genomic_DNA"/>
</dbReference>
<dbReference type="SMR" id="Q9TX44"/>
<dbReference type="eggNOG" id="KOG4447">
    <property type="taxonomic scope" value="Eukaryota"/>
</dbReference>
<dbReference type="OrthoDB" id="8583783at2759"/>
<dbReference type="GO" id="GO:0005634">
    <property type="term" value="C:nucleus"/>
    <property type="evidence" value="ECO:0000250"/>
    <property type="project" value="UniProtKB"/>
</dbReference>
<dbReference type="GO" id="GO:0003677">
    <property type="term" value="F:DNA binding"/>
    <property type="evidence" value="ECO:0000250"/>
    <property type="project" value="UniProtKB"/>
</dbReference>
<dbReference type="GO" id="GO:0000981">
    <property type="term" value="F:DNA-binding transcription factor activity, RNA polymerase II-specific"/>
    <property type="evidence" value="ECO:0007669"/>
    <property type="project" value="TreeGrafter"/>
</dbReference>
<dbReference type="GO" id="GO:0046982">
    <property type="term" value="F:protein heterodimerization activity"/>
    <property type="evidence" value="ECO:0000250"/>
    <property type="project" value="UniProtKB"/>
</dbReference>
<dbReference type="GO" id="GO:0042803">
    <property type="term" value="F:protein homodimerization activity"/>
    <property type="evidence" value="ECO:0000250"/>
    <property type="project" value="UniProtKB"/>
</dbReference>
<dbReference type="GO" id="GO:0000977">
    <property type="term" value="F:RNA polymerase II transcription regulatory region sequence-specific DNA binding"/>
    <property type="evidence" value="ECO:0007669"/>
    <property type="project" value="TreeGrafter"/>
</dbReference>
<dbReference type="GO" id="GO:0007369">
    <property type="term" value="P:gastrulation"/>
    <property type="evidence" value="ECO:0000250"/>
    <property type="project" value="UniProtKB"/>
</dbReference>
<dbReference type="GO" id="GO:0007443">
    <property type="term" value="P:Malpighian tubule morphogenesis"/>
    <property type="evidence" value="ECO:0000250"/>
    <property type="project" value="UniProtKB"/>
</dbReference>
<dbReference type="GO" id="GO:0007498">
    <property type="term" value="P:mesoderm development"/>
    <property type="evidence" value="ECO:0000250"/>
    <property type="project" value="UniProtKB"/>
</dbReference>
<dbReference type="GO" id="GO:0001710">
    <property type="term" value="P:mesodermal cell fate commitment"/>
    <property type="evidence" value="ECO:0000250"/>
    <property type="project" value="UniProtKB"/>
</dbReference>
<dbReference type="GO" id="GO:0016202">
    <property type="term" value="P:regulation of striated muscle tissue development"/>
    <property type="evidence" value="ECO:0000250"/>
    <property type="project" value="UniProtKB"/>
</dbReference>
<dbReference type="GO" id="GO:0007370">
    <property type="term" value="P:ventral furrow formation"/>
    <property type="evidence" value="ECO:0000250"/>
    <property type="project" value="UniProtKB"/>
</dbReference>
<dbReference type="CDD" id="cd11464">
    <property type="entry name" value="bHLH_TS_TWIST"/>
    <property type="match status" value="1"/>
</dbReference>
<dbReference type="FunFam" id="4.10.280.10:FF:000030">
    <property type="entry name" value="Twist transcription factor"/>
    <property type="match status" value="1"/>
</dbReference>
<dbReference type="Gene3D" id="4.10.280.10">
    <property type="entry name" value="Helix-loop-helix DNA-binding domain"/>
    <property type="match status" value="1"/>
</dbReference>
<dbReference type="InterPro" id="IPR011598">
    <property type="entry name" value="bHLH_dom"/>
</dbReference>
<dbReference type="InterPro" id="IPR050283">
    <property type="entry name" value="E-box_TF_Regulators"/>
</dbReference>
<dbReference type="InterPro" id="IPR036638">
    <property type="entry name" value="HLH_DNA-bd_sf"/>
</dbReference>
<dbReference type="InterPro" id="IPR015789">
    <property type="entry name" value="Twist-rel_bHLH"/>
</dbReference>
<dbReference type="PANTHER" id="PTHR23349">
    <property type="entry name" value="BASIC HELIX-LOOP-HELIX TRANSCRIPTION FACTOR, TWIST"/>
    <property type="match status" value="1"/>
</dbReference>
<dbReference type="PANTHER" id="PTHR23349:SF50">
    <property type="entry name" value="PROTEIN TWIST"/>
    <property type="match status" value="1"/>
</dbReference>
<dbReference type="Pfam" id="PF00010">
    <property type="entry name" value="HLH"/>
    <property type="match status" value="1"/>
</dbReference>
<dbReference type="SMART" id="SM00353">
    <property type="entry name" value="HLH"/>
    <property type="match status" value="1"/>
</dbReference>
<dbReference type="SUPFAM" id="SSF47459">
    <property type="entry name" value="HLH, helix-loop-helix DNA-binding domain"/>
    <property type="match status" value="1"/>
</dbReference>
<dbReference type="PROSITE" id="PS50888">
    <property type="entry name" value="BHLH"/>
    <property type="match status" value="1"/>
</dbReference>